<comment type="function">
    <text evidence="1">One of the primary rRNA binding proteins, it binds directly to 16S rRNA where it nucleates assembly of the body of the 30S subunit.</text>
</comment>
<comment type="function">
    <text evidence="1">With S5 and S12 plays an important role in translational accuracy.</text>
</comment>
<comment type="subunit">
    <text evidence="1">Part of the 30S ribosomal subunit. Contacts protein S5. The interaction surface between S4 and S5 is involved in control of translational fidelity.</text>
</comment>
<comment type="similarity">
    <text evidence="1">Belongs to the universal ribosomal protein uS4 family.</text>
</comment>
<feature type="chain" id="PRO_1000140781" description="Small ribosomal subunit protein uS4">
    <location>
        <begin position="1"/>
        <end position="205"/>
    </location>
</feature>
<feature type="domain" description="S4 RNA-binding" evidence="1">
    <location>
        <begin position="94"/>
        <end position="157"/>
    </location>
</feature>
<feature type="region of interest" description="Disordered" evidence="2">
    <location>
        <begin position="1"/>
        <end position="46"/>
    </location>
</feature>
<feature type="compositionally biased region" description="Basic and acidic residues" evidence="2">
    <location>
        <begin position="1"/>
        <end position="16"/>
    </location>
</feature>
<reference key="1">
    <citation type="journal article" date="2010" name="Stand. Genomic Sci.">
        <title>Complete genome sequence of Rhizobium leguminosarum bv trifolii strain WSM2304, an effective microsymbiont of the South American clover Trifolium polymorphum.</title>
        <authorList>
            <person name="Reeve W."/>
            <person name="O'Hara G."/>
            <person name="Chain P."/>
            <person name="Ardley J."/>
            <person name="Brau L."/>
            <person name="Nandesena K."/>
            <person name="Tiwari R."/>
            <person name="Malfatti S."/>
            <person name="Kiss H."/>
            <person name="Lapidus A."/>
            <person name="Copeland A."/>
            <person name="Nolan M."/>
            <person name="Land M."/>
            <person name="Ivanova N."/>
            <person name="Mavromatis K."/>
            <person name="Markowitz V."/>
            <person name="Kyrpides N."/>
            <person name="Melino V."/>
            <person name="Denton M."/>
            <person name="Yates R."/>
            <person name="Howieson J."/>
        </authorList>
    </citation>
    <scope>NUCLEOTIDE SEQUENCE [LARGE SCALE GENOMIC DNA]</scope>
    <source>
        <strain>WSM2304</strain>
    </source>
</reference>
<dbReference type="EMBL" id="CP001191">
    <property type="protein sequence ID" value="ACI55232.1"/>
    <property type="molecule type" value="Genomic_DNA"/>
</dbReference>
<dbReference type="RefSeq" id="WP_003586216.1">
    <property type="nucleotide sequence ID" value="NC_011369.1"/>
</dbReference>
<dbReference type="SMR" id="B5ZRF1"/>
<dbReference type="STRING" id="395492.Rleg2_1947"/>
<dbReference type="KEGG" id="rlt:Rleg2_1947"/>
<dbReference type="eggNOG" id="COG0522">
    <property type="taxonomic scope" value="Bacteria"/>
</dbReference>
<dbReference type="HOGENOM" id="CLU_092403_0_0_5"/>
<dbReference type="Proteomes" id="UP000008330">
    <property type="component" value="Chromosome"/>
</dbReference>
<dbReference type="GO" id="GO:0015935">
    <property type="term" value="C:small ribosomal subunit"/>
    <property type="evidence" value="ECO:0007669"/>
    <property type="project" value="InterPro"/>
</dbReference>
<dbReference type="GO" id="GO:0019843">
    <property type="term" value="F:rRNA binding"/>
    <property type="evidence" value="ECO:0007669"/>
    <property type="project" value="UniProtKB-UniRule"/>
</dbReference>
<dbReference type="GO" id="GO:0003735">
    <property type="term" value="F:structural constituent of ribosome"/>
    <property type="evidence" value="ECO:0007669"/>
    <property type="project" value="InterPro"/>
</dbReference>
<dbReference type="GO" id="GO:0042274">
    <property type="term" value="P:ribosomal small subunit biogenesis"/>
    <property type="evidence" value="ECO:0007669"/>
    <property type="project" value="TreeGrafter"/>
</dbReference>
<dbReference type="GO" id="GO:0006412">
    <property type="term" value="P:translation"/>
    <property type="evidence" value="ECO:0007669"/>
    <property type="project" value="UniProtKB-UniRule"/>
</dbReference>
<dbReference type="CDD" id="cd00165">
    <property type="entry name" value="S4"/>
    <property type="match status" value="1"/>
</dbReference>
<dbReference type="FunFam" id="3.10.290.10:FF:000001">
    <property type="entry name" value="30S ribosomal protein S4"/>
    <property type="match status" value="1"/>
</dbReference>
<dbReference type="Gene3D" id="1.10.1050.10">
    <property type="entry name" value="Ribosomal Protein S4 Delta 41, Chain A, domain 1"/>
    <property type="match status" value="1"/>
</dbReference>
<dbReference type="Gene3D" id="3.10.290.10">
    <property type="entry name" value="RNA-binding S4 domain"/>
    <property type="match status" value="1"/>
</dbReference>
<dbReference type="HAMAP" id="MF_01306_B">
    <property type="entry name" value="Ribosomal_uS4_B"/>
    <property type="match status" value="1"/>
</dbReference>
<dbReference type="InterPro" id="IPR022801">
    <property type="entry name" value="Ribosomal_uS4"/>
</dbReference>
<dbReference type="InterPro" id="IPR005709">
    <property type="entry name" value="Ribosomal_uS4_bac-type"/>
</dbReference>
<dbReference type="InterPro" id="IPR018079">
    <property type="entry name" value="Ribosomal_uS4_CS"/>
</dbReference>
<dbReference type="InterPro" id="IPR001912">
    <property type="entry name" value="Ribosomal_uS4_N"/>
</dbReference>
<dbReference type="InterPro" id="IPR002942">
    <property type="entry name" value="S4_RNA-bd"/>
</dbReference>
<dbReference type="InterPro" id="IPR036986">
    <property type="entry name" value="S4_RNA-bd_sf"/>
</dbReference>
<dbReference type="NCBIfam" id="NF003717">
    <property type="entry name" value="PRK05327.1"/>
    <property type="match status" value="1"/>
</dbReference>
<dbReference type="NCBIfam" id="TIGR01017">
    <property type="entry name" value="rpsD_bact"/>
    <property type="match status" value="1"/>
</dbReference>
<dbReference type="PANTHER" id="PTHR11831">
    <property type="entry name" value="30S 40S RIBOSOMAL PROTEIN"/>
    <property type="match status" value="1"/>
</dbReference>
<dbReference type="PANTHER" id="PTHR11831:SF4">
    <property type="entry name" value="SMALL RIBOSOMAL SUBUNIT PROTEIN US4M"/>
    <property type="match status" value="1"/>
</dbReference>
<dbReference type="Pfam" id="PF00163">
    <property type="entry name" value="Ribosomal_S4"/>
    <property type="match status" value="1"/>
</dbReference>
<dbReference type="Pfam" id="PF01479">
    <property type="entry name" value="S4"/>
    <property type="match status" value="1"/>
</dbReference>
<dbReference type="SMART" id="SM01390">
    <property type="entry name" value="Ribosomal_S4"/>
    <property type="match status" value="1"/>
</dbReference>
<dbReference type="SMART" id="SM00363">
    <property type="entry name" value="S4"/>
    <property type="match status" value="1"/>
</dbReference>
<dbReference type="SUPFAM" id="SSF55174">
    <property type="entry name" value="Alpha-L RNA-binding motif"/>
    <property type="match status" value="1"/>
</dbReference>
<dbReference type="PROSITE" id="PS00632">
    <property type="entry name" value="RIBOSOMAL_S4"/>
    <property type="match status" value="1"/>
</dbReference>
<dbReference type="PROSITE" id="PS50889">
    <property type="entry name" value="S4"/>
    <property type="match status" value="1"/>
</dbReference>
<organism>
    <name type="scientific">Rhizobium leguminosarum bv. trifolii (strain WSM2304)</name>
    <dbReference type="NCBI Taxonomy" id="395492"/>
    <lineage>
        <taxon>Bacteria</taxon>
        <taxon>Pseudomonadati</taxon>
        <taxon>Pseudomonadota</taxon>
        <taxon>Alphaproteobacteria</taxon>
        <taxon>Hyphomicrobiales</taxon>
        <taxon>Rhizobiaceae</taxon>
        <taxon>Rhizobium/Agrobacterium group</taxon>
        <taxon>Rhizobium</taxon>
    </lineage>
</organism>
<accession>B5ZRF1</accession>
<protein>
    <recommendedName>
        <fullName evidence="1">Small ribosomal subunit protein uS4</fullName>
    </recommendedName>
    <alternativeName>
        <fullName evidence="3">30S ribosomal protein S4</fullName>
    </alternativeName>
</protein>
<keyword id="KW-1185">Reference proteome</keyword>
<keyword id="KW-0687">Ribonucleoprotein</keyword>
<keyword id="KW-0689">Ribosomal protein</keyword>
<keyword id="KW-0694">RNA-binding</keyword>
<keyword id="KW-0699">rRNA-binding</keyword>
<proteinExistence type="inferred from homology"/>
<name>RS4_RHILW</name>
<evidence type="ECO:0000255" key="1">
    <source>
        <dbReference type="HAMAP-Rule" id="MF_01306"/>
    </source>
</evidence>
<evidence type="ECO:0000256" key="2">
    <source>
        <dbReference type="SAM" id="MobiDB-lite"/>
    </source>
</evidence>
<evidence type="ECO:0000305" key="3"/>
<sequence>MSKRESSKYKIDRRMGENIWGRPKSPVNRREYGPGQHGQRRKGKLSDFGVQLRAKQKLKGYYGDLREKQFRAIFAEADRRKGDTSENLIGLLESRLDAIVYRAKFVPTVFAARQFVNHGHVTVNGVRVNIGSYRCKAGDVIEVREKSKQLVIVLEAVSLAERDVPDYIEVDHNKMVATFGRVPTLSDVPFPVVMEPHLVVEFYSR</sequence>
<gene>
    <name evidence="1" type="primary">rpsD</name>
    <name type="ordered locus">Rleg2_1947</name>
</gene>